<organism>
    <name type="scientific">Lychas mucronatus</name>
    <name type="common">Chinese swimming scorpion</name>
    <dbReference type="NCBI Taxonomy" id="172552"/>
    <lineage>
        <taxon>Eukaryota</taxon>
        <taxon>Metazoa</taxon>
        <taxon>Ecdysozoa</taxon>
        <taxon>Arthropoda</taxon>
        <taxon>Chelicerata</taxon>
        <taxon>Arachnida</taxon>
        <taxon>Scorpiones</taxon>
        <taxon>Buthida</taxon>
        <taxon>Buthoidea</taxon>
        <taxon>Buthidae</taxon>
        <taxon>Lychas</taxon>
    </lineage>
</organism>
<sequence>MKSVCGVLIILVVLTTMLSISTFSTVGAEADCPISEAIKCVEKCNQKVEVCEPGVCKCSG</sequence>
<name>KA293_LYCMC</name>
<dbReference type="EMBL" id="GT028769">
    <property type="status" value="NOT_ANNOTATED_CDS"/>
    <property type="molecule type" value="mRNA"/>
</dbReference>
<dbReference type="GO" id="GO:0005576">
    <property type="term" value="C:extracellular region"/>
    <property type="evidence" value="ECO:0007669"/>
    <property type="project" value="UniProtKB-SubCell"/>
</dbReference>
<dbReference type="GO" id="GO:0099106">
    <property type="term" value="F:ion channel regulator activity"/>
    <property type="evidence" value="ECO:0007669"/>
    <property type="project" value="UniProtKB-KW"/>
</dbReference>
<dbReference type="GO" id="GO:0090729">
    <property type="term" value="F:toxin activity"/>
    <property type="evidence" value="ECO:0007669"/>
    <property type="project" value="UniProtKB-KW"/>
</dbReference>
<feature type="signal peptide" evidence="2">
    <location>
        <begin position="1"/>
        <end position="28"/>
    </location>
</feature>
<feature type="chain" id="PRO_0000403837" description="Potassium channel toxin alpha-KTx 29.3">
    <location>
        <begin position="29"/>
        <end position="60"/>
    </location>
</feature>
<feature type="disulfide bond" evidence="1">
    <location>
        <begin position="32"/>
        <end position="51"/>
    </location>
</feature>
<feature type="disulfide bond" evidence="1">
    <location>
        <begin position="40"/>
        <end position="56"/>
    </location>
</feature>
<feature type="disulfide bond" evidence="1">
    <location>
        <begin position="44"/>
        <end position="58"/>
    </location>
</feature>
<comment type="function">
    <text evidence="1">Weakly inhibits the Kv1.3/KCNA3 channel (1 uM of thetoxin inhibits currents by 13.2%) and Kv7.1/KCNQ1 channel (10 uM of the toxin inhibits currents by 27.7%).</text>
</comment>
<comment type="subcellular location">
    <subcellularLocation>
        <location evidence="1">Secreted</location>
    </subcellularLocation>
</comment>
<comment type="tissue specificity">
    <text>Expressed by the venom gland.</text>
</comment>
<comment type="domain">
    <text evidence="3">Has the structural arrangement of an alpha-helix connected to antiparallel beta-sheets by disulfide bonds (CS-alpha/beta).</text>
</comment>
<comment type="similarity">
    <text evidence="3">Belongs to the short scorpion toxin superfamily. Potassium channel inhibitor family. Alpha-KTx 29 subfamily.</text>
</comment>
<proteinExistence type="evidence at transcript level"/>
<reference key="1">
    <citation type="journal article" date="2010" name="BMC Genomics">
        <title>Comparative venom gland transcriptome analysis of the scorpion Lychas mucronatus reveals intraspecific toxic gene diversity and new venomous components.</title>
        <authorList>
            <person name="Zhao R."/>
            <person name="Ma Y."/>
            <person name="He Y."/>
            <person name="Di Z."/>
            <person name="Wu Y.-L."/>
            <person name="Cao Z.-J."/>
            <person name="Li W.-X."/>
        </authorList>
    </citation>
    <scope>NUCLEOTIDE SEQUENCE [MRNA]</scope>
    <source>
        <strain>Yunnan</strain>
        <tissue>Venom gland</tissue>
    </source>
</reference>
<reference key="2">
    <citation type="journal article" date="2012" name="PLoS ONE">
        <title>Structural and functional diversity of acidic scorpion potassium channel toxins.</title>
        <authorList>
            <person name="Chen Z.Y."/>
            <person name="Zeng D.Y."/>
            <person name="Hu Y.T."/>
            <person name="He Y.W."/>
            <person name="Pan N."/>
            <person name="Ding J.P."/>
            <person name="Cao Z.J."/>
            <person name="Liu M.L."/>
            <person name="Li W.X."/>
            <person name="Yi H."/>
            <person name="Jiang L."/>
            <person name="Wu Y.L."/>
        </authorList>
    </citation>
    <scope>NUCLEOTIDE SEQUENCE [MRNA]</scope>
    <source>
        <tissue>Venom gland</tissue>
    </source>
</reference>
<protein>
    <recommendedName>
        <fullName>Potassium channel toxin alpha-KTx 29.3</fullName>
    </recommendedName>
    <alternativeName>
        <fullName>Neurotoxin LmKTx95</fullName>
    </alternativeName>
    <alternativeName>
        <fullName>Neurotoxin-E</fullName>
    </alternativeName>
</protein>
<keyword id="KW-1015">Disulfide bond</keyword>
<keyword id="KW-0872">Ion channel impairing toxin</keyword>
<keyword id="KW-0528">Neurotoxin</keyword>
<keyword id="KW-0964">Secreted</keyword>
<keyword id="KW-0732">Signal</keyword>
<keyword id="KW-0800">Toxin</keyword>
<evidence type="ECO:0000250" key="1"/>
<evidence type="ECO:0000255" key="2"/>
<evidence type="ECO:0000305" key="3"/>
<accession>P0CI86</accession>